<reference key="1">
    <citation type="submission" date="2005-12" db="EMBL/GenBank/DDBJ databases">
        <title>cDNA cloning and characterization of the venom allergens from Solenopsis saevissima.</title>
        <authorList>
            <person name="Brochetto Braga M.R."/>
            <person name="Do Nascimento R.C."/>
            <person name="Alvares L.E."/>
            <person name="Da Silva G.P."/>
            <person name="Coutinho L.L."/>
            <person name="Colombo Arnoldi F.G."/>
            <person name="Viviani V.R."/>
        </authorList>
    </citation>
    <scope>NUCLEOTIDE SEQUENCE [MRNA]</scope>
</reference>
<protein>
    <recommendedName>
        <fullName>Venom allergen 2</fullName>
    </recommendedName>
    <allergenName>Sol s 2</allergenName>
</protein>
<sequence length="138" mass="15231">MKSFVLATCLLGFAQIIYADTEKLKILRKDIAKCARTLPKCVNQPDDPLARVDVWHCALAKSGVFDDPDPAAIKKKYKKFCAIAVTDPANVENCKKVTSRCVDKETQCSKSNRQKAINIAACILRSGVTETTVLAREK</sequence>
<comment type="subunit">
    <text evidence="1">Homodimer; disulfide-linked.</text>
</comment>
<comment type="subcellular location">
    <subcellularLocation>
        <location>Secreted</location>
    </subcellularLocation>
</comment>
<comment type="tissue specificity">
    <text>Expressed by the venom gland.</text>
</comment>
<comment type="allergen">
    <text evidence="1">Causes an allergic reaction in human.</text>
</comment>
<comment type="similarity">
    <text evidence="3">Belongs to the ant venom allergen 2/4 family.</text>
</comment>
<name>VA2_SOLSV</name>
<accession>A5X2H7</accession>
<organism>
    <name type="scientific">Solenopsis saevissima</name>
    <name type="common">Fire ant</name>
    <name type="synonym">Myrmecia saevissima</name>
    <dbReference type="NCBI Taxonomy" id="176597"/>
    <lineage>
        <taxon>Eukaryota</taxon>
        <taxon>Metazoa</taxon>
        <taxon>Ecdysozoa</taxon>
        <taxon>Arthropoda</taxon>
        <taxon>Hexapoda</taxon>
        <taxon>Insecta</taxon>
        <taxon>Pterygota</taxon>
        <taxon>Neoptera</taxon>
        <taxon>Endopterygota</taxon>
        <taxon>Hymenoptera</taxon>
        <taxon>Apocrita</taxon>
        <taxon>Aculeata</taxon>
        <taxon>Formicoidea</taxon>
        <taxon>Formicidae</taxon>
        <taxon>Myrmicinae</taxon>
        <taxon>Solenopsis</taxon>
    </lineage>
</organism>
<evidence type="ECO:0000250" key="1"/>
<evidence type="ECO:0000255" key="2"/>
<evidence type="ECO:0000305" key="3"/>
<feature type="signal peptide" evidence="2">
    <location>
        <begin position="1"/>
        <end position="19"/>
    </location>
</feature>
<feature type="chain" id="PRO_0000300483" description="Venom allergen 2">
    <location>
        <begin position="20"/>
        <end position="138"/>
    </location>
</feature>
<proteinExistence type="evidence at transcript level"/>
<dbReference type="EMBL" id="DQ342279">
    <property type="protein sequence ID" value="ABC58726.1"/>
    <property type="molecule type" value="mRNA"/>
</dbReference>
<dbReference type="SMR" id="A5X2H7"/>
<dbReference type="Allergome" id="3488">
    <property type="allergen name" value="Sol s 2.0101"/>
</dbReference>
<dbReference type="Allergome" id="638">
    <property type="allergen name" value="Sol s 2"/>
</dbReference>
<dbReference type="GO" id="GO:0005576">
    <property type="term" value="C:extracellular region"/>
    <property type="evidence" value="ECO:0007669"/>
    <property type="project" value="UniProtKB-SubCell"/>
</dbReference>
<dbReference type="CDD" id="cd12800">
    <property type="entry name" value="Sol_i_2"/>
    <property type="match status" value="1"/>
</dbReference>
<dbReference type="Gene3D" id="1.10.238.190">
    <property type="match status" value="1"/>
</dbReference>
<dbReference type="InterPro" id="IPR020181">
    <property type="entry name" value="Ant_venom_allergen_Sol_i_2"/>
</dbReference>
<dbReference type="InterPro" id="IPR038211">
    <property type="entry name" value="Ant_venon_allerg_soli_2/4_sf"/>
</dbReference>
<dbReference type="InterPro" id="IPR055216">
    <property type="entry name" value="Sol_i_2/4"/>
</dbReference>
<dbReference type="Pfam" id="PF22750">
    <property type="entry name" value="Sol_i_2"/>
    <property type="match status" value="1"/>
</dbReference>
<keyword id="KW-0020">Allergen</keyword>
<keyword id="KW-1015">Disulfide bond</keyword>
<keyword id="KW-0964">Secreted</keyword>
<keyword id="KW-0732">Signal</keyword>